<keyword id="KW-0536">Nodulation</keyword>
<accession>P55959</accession>
<feature type="peptide" id="PRO_0000044077" description="Early nodulin-40">
    <location>
        <begin position="1"/>
        <end position="13"/>
    </location>
</feature>
<evidence type="ECO:0000250" key="1"/>
<comment type="function">
    <text evidence="1">Modulates the action of auxin, and may function as plant growth regulator that alters phytohormone responses.</text>
</comment>
<comment type="developmental stage">
    <text>Expressed in the early stages of the nodule development.</text>
</comment>
<organism>
    <name type="scientific">Pisum sativum</name>
    <name type="common">Garden pea</name>
    <name type="synonym">Lathyrus oleraceus</name>
    <dbReference type="NCBI Taxonomy" id="3888"/>
    <lineage>
        <taxon>Eukaryota</taxon>
        <taxon>Viridiplantae</taxon>
        <taxon>Streptophyta</taxon>
        <taxon>Embryophyta</taxon>
        <taxon>Tracheophyta</taxon>
        <taxon>Spermatophyta</taxon>
        <taxon>Magnoliopsida</taxon>
        <taxon>eudicotyledons</taxon>
        <taxon>Gunneridae</taxon>
        <taxon>Pentapetalae</taxon>
        <taxon>rosids</taxon>
        <taxon>fabids</taxon>
        <taxon>Fabales</taxon>
        <taxon>Fabaceae</taxon>
        <taxon>Papilionoideae</taxon>
        <taxon>50 kb inversion clade</taxon>
        <taxon>NPAAA clade</taxon>
        <taxon>Hologalegina</taxon>
        <taxon>IRL clade</taxon>
        <taxon>Fabeae</taxon>
        <taxon>Pisum</taxon>
    </lineage>
</organism>
<sequence>MKFLCWQKSIHGS</sequence>
<reference key="1">
    <citation type="journal article" date="1994" name="Plant Mol. Biol.">
        <title>Comparison of soybean and pea ENOD40 cDNA clones representing genes expressed during both early and late stages of nodule development.</title>
        <authorList>
            <person name="Matvienko M."/>
            <person name="van de Sande K."/>
            <person name="Yang W.C."/>
            <person name="van Kammen A."/>
            <person name="Bisseling T."/>
            <person name="Franssen H.J."/>
        </authorList>
    </citation>
    <scope>NUCLEOTIDE SEQUENCE [MRNA]</scope>
    <source>
        <strain>cv. Sparkle</strain>
        <tissue>Root nodule</tissue>
    </source>
</reference>
<gene>
    <name type="primary">ENOD40</name>
</gene>
<protein>
    <recommendedName>
        <fullName>Early nodulin-40</fullName>
    </recommendedName>
</protein>
<name>NO40_PEA</name>
<proteinExistence type="evidence at transcript level"/>
<dbReference type="EMBL" id="X81064">
    <property type="status" value="NOT_ANNOTATED_CDS"/>
    <property type="molecule type" value="mRNA"/>
</dbReference>
<dbReference type="GO" id="GO:0009877">
    <property type="term" value="P:nodulation"/>
    <property type="evidence" value="ECO:0007669"/>
    <property type="project" value="UniProtKB-KW"/>
</dbReference>
<dbReference type="InterPro" id="IPR013186">
    <property type="entry name" value="ENOD40"/>
</dbReference>
<dbReference type="Pfam" id="PF08247">
    <property type="entry name" value="ENOD40"/>
    <property type="match status" value="1"/>
</dbReference>